<keyword id="KW-0050">Antiport</keyword>
<keyword id="KW-0997">Cell inner membrane</keyword>
<keyword id="KW-1003">Cell membrane</keyword>
<keyword id="KW-0406">Ion transport</keyword>
<keyword id="KW-0472">Membrane</keyword>
<keyword id="KW-0630">Potassium</keyword>
<keyword id="KW-0633">Potassium transport</keyword>
<keyword id="KW-1185">Reference proteome</keyword>
<keyword id="KW-0812">Transmembrane</keyword>
<keyword id="KW-1133">Transmembrane helix</keyword>
<keyword id="KW-0813">Transport</keyword>
<organism>
    <name type="scientific">Haemophilus influenzae (strain ATCC 51907 / DSM 11121 / KW20 / Rd)</name>
    <dbReference type="NCBI Taxonomy" id="71421"/>
    <lineage>
        <taxon>Bacteria</taxon>
        <taxon>Pseudomonadati</taxon>
        <taxon>Pseudomonadota</taxon>
        <taxon>Gammaproteobacteria</taxon>
        <taxon>Pasteurellales</taxon>
        <taxon>Pasteurellaceae</taxon>
        <taxon>Haemophilus</taxon>
    </lineage>
</organism>
<reference key="1">
    <citation type="journal article" date="1995" name="Science">
        <title>Whole-genome random sequencing and assembly of Haemophilus influenzae Rd.</title>
        <authorList>
            <person name="Fleischmann R.D."/>
            <person name="Adams M.D."/>
            <person name="White O."/>
            <person name="Clayton R.A."/>
            <person name="Kirkness E.F."/>
            <person name="Kerlavage A.R."/>
            <person name="Bult C.J."/>
            <person name="Tomb J.-F."/>
            <person name="Dougherty B.A."/>
            <person name="Merrick J.M."/>
            <person name="McKenney K."/>
            <person name="Sutton G.G."/>
            <person name="FitzHugh W."/>
            <person name="Fields C.A."/>
            <person name="Gocayne J.D."/>
            <person name="Scott J.D."/>
            <person name="Shirley R."/>
            <person name="Liu L.-I."/>
            <person name="Glodek A."/>
            <person name="Kelley J.M."/>
            <person name="Weidman J.F."/>
            <person name="Phillips C.A."/>
            <person name="Spriggs T."/>
            <person name="Hedblom E."/>
            <person name="Cotton M.D."/>
            <person name="Utterback T.R."/>
            <person name="Hanna M.C."/>
            <person name="Nguyen D.T."/>
            <person name="Saudek D.M."/>
            <person name="Brandon R.C."/>
            <person name="Fine L.D."/>
            <person name="Fritchman J.L."/>
            <person name="Fuhrmann J.L."/>
            <person name="Geoghagen N.S.M."/>
            <person name="Gnehm C.L."/>
            <person name="McDonald L.A."/>
            <person name="Small K.V."/>
            <person name="Fraser C.M."/>
            <person name="Smith H.O."/>
            <person name="Venter J.C."/>
        </authorList>
    </citation>
    <scope>NUCLEOTIDE SEQUENCE [LARGE SCALE GENOMIC DNA]</scope>
    <source>
        <strain>ATCC 51907 / DSM 11121 / KW20 / Rd</strain>
    </source>
</reference>
<name>KEFX_HAEIN</name>
<comment type="function">
    <text evidence="1">Transport system that facilitate potassium-efflux, possibly by potassium-proton antiport.</text>
</comment>
<comment type="subcellular location">
    <subcellularLocation>
        <location evidence="1">Cell inner membrane</location>
        <topology evidence="1">Multi-pass membrane protein</topology>
    </subcellularLocation>
</comment>
<comment type="similarity">
    <text evidence="4">Belongs to the monovalent cation:proton antiporter 2 (CPA2) transporter (TC 2.A.37) family.</text>
</comment>
<feature type="chain" id="PRO_0000196614" description="Glutathione-regulated potassium-efflux system protein">
    <location>
        <begin position="1"/>
        <end position="618"/>
    </location>
</feature>
<feature type="transmembrane region" description="Helical" evidence="2">
    <location>
        <begin position="6"/>
        <end position="26"/>
    </location>
</feature>
<feature type="transmembrane region" description="Helical" evidence="2">
    <location>
        <begin position="32"/>
        <end position="52"/>
    </location>
</feature>
<feature type="transmembrane region" description="Helical" evidence="2">
    <location>
        <begin position="55"/>
        <end position="75"/>
    </location>
</feature>
<feature type="transmembrane region" description="Helical" evidence="2">
    <location>
        <begin position="94"/>
        <end position="114"/>
    </location>
</feature>
<feature type="transmembrane region" description="Helical" evidence="2">
    <location>
        <begin position="118"/>
        <end position="138"/>
    </location>
</feature>
<feature type="transmembrane region" description="Helical" evidence="2">
    <location>
        <begin position="152"/>
        <end position="172"/>
    </location>
</feature>
<feature type="transmembrane region" description="Helical" evidence="2">
    <location>
        <begin position="186"/>
        <end position="206"/>
    </location>
</feature>
<feature type="transmembrane region" description="Helical" evidence="2">
    <location>
        <begin position="227"/>
        <end position="247"/>
    </location>
</feature>
<feature type="transmembrane region" description="Helical" evidence="2">
    <location>
        <begin position="274"/>
        <end position="294"/>
    </location>
</feature>
<feature type="transmembrane region" description="Helical" evidence="2">
    <location>
        <begin position="298"/>
        <end position="318"/>
    </location>
</feature>
<feature type="transmembrane region" description="Helical" evidence="2">
    <location>
        <begin position="336"/>
        <end position="356"/>
    </location>
</feature>
<feature type="transmembrane region" description="Helical" evidence="2">
    <location>
        <begin position="362"/>
        <end position="382"/>
    </location>
</feature>
<feature type="domain" description="RCK N-terminal" evidence="3">
    <location>
        <begin position="409"/>
        <end position="525"/>
    </location>
</feature>
<evidence type="ECO:0000250" key="1"/>
<evidence type="ECO:0000255" key="2"/>
<evidence type="ECO:0000255" key="3">
    <source>
        <dbReference type="PROSITE-ProRule" id="PRU00543"/>
    </source>
</evidence>
<evidence type="ECO:0000305" key="4"/>
<accession>P44933</accession>
<proteinExistence type="inferred from homology"/>
<gene>
    <name type="primary">kefBC</name>
    <name type="ordered locus">HI_0911</name>
</gene>
<sequence>MSQLANPELMKVVILLASSVTIVPLFKRLGLGSVLGYLVAGCLIGPSVFGIVQEPTAVVHLAELGVVMFLFIIGLEMYPERLWAMRKAIFGRGLLQVGLCGCLLTFSGIYLLGLTKEVSFIAGMGFTLSSTAIVMQSLEERGLTSTSKGQRVISTLIFEDIAIVPLLASVAFLAPHSKEATPHTDWVSIGIALSAVVGLIVTGKWLMNPLFRLISKARIREMMTAGALLVVLGAALAMEIGGLSMAMGAFVAGVMMSESAFRHQLEADIEPFRGLLLGLFFMGVGMSLDLHLVFNHWILLLGIVFLYILGKASAVYIIARITRLDHREAIGRMSLMAHGGEFAFVLFSAAATAEVISNEEQATFTAAVIISMLFSPIIAQIARKLIQRTEPKHLDQLDENDLDTIVDLEDNVLVIGFGRFSQIVCQTLLIRGISVSVIDRNIENIRAAAKFGFKVYYGDGIRLDVLRAAGIEKAKCVVLGINDTQRIEHIVSQMKEAYPNLPILTRTYDRKTTVSLIKQDVDFIVRETFESAITLSRATLMKLGIDKIEAEEIIKEVRTLDQERLNEEVLHGFSNEIVKKYWTPRPFIKPHLDTKALNKETEEILSEKIEEEISNDHS</sequence>
<dbReference type="EMBL" id="L42023">
    <property type="protein sequence ID" value="AAC22568.1"/>
    <property type="molecule type" value="Genomic_DNA"/>
</dbReference>
<dbReference type="PIR" id="A64102">
    <property type="entry name" value="A64102"/>
</dbReference>
<dbReference type="RefSeq" id="NP_439071.1">
    <property type="nucleotide sequence ID" value="NC_000907.1"/>
</dbReference>
<dbReference type="SMR" id="P44933"/>
<dbReference type="STRING" id="71421.HI_0911"/>
<dbReference type="DNASU" id="950431"/>
<dbReference type="EnsemblBacteria" id="AAC22568">
    <property type="protein sequence ID" value="AAC22568"/>
    <property type="gene ID" value="HI_0911"/>
</dbReference>
<dbReference type="KEGG" id="hin:HI_0911"/>
<dbReference type="PATRIC" id="fig|71421.8.peg.952"/>
<dbReference type="eggNOG" id="COG0475">
    <property type="taxonomic scope" value="Bacteria"/>
</dbReference>
<dbReference type="eggNOG" id="COG1226">
    <property type="taxonomic scope" value="Bacteria"/>
</dbReference>
<dbReference type="HOGENOM" id="CLU_005126_9_3_6"/>
<dbReference type="OrthoDB" id="9781411at2"/>
<dbReference type="PhylomeDB" id="P44933"/>
<dbReference type="BioCyc" id="HINF71421:G1GJ1-950-MONOMER"/>
<dbReference type="Proteomes" id="UP000000579">
    <property type="component" value="Chromosome"/>
</dbReference>
<dbReference type="GO" id="GO:0005886">
    <property type="term" value="C:plasma membrane"/>
    <property type="evidence" value="ECO:0000318"/>
    <property type="project" value="GO_Central"/>
</dbReference>
<dbReference type="GO" id="GO:0015297">
    <property type="term" value="F:antiporter activity"/>
    <property type="evidence" value="ECO:0007669"/>
    <property type="project" value="UniProtKB-KW"/>
</dbReference>
<dbReference type="GO" id="GO:0008324">
    <property type="term" value="F:monoatomic cation transmembrane transporter activity"/>
    <property type="evidence" value="ECO:0007669"/>
    <property type="project" value="InterPro"/>
</dbReference>
<dbReference type="GO" id="GO:0006813">
    <property type="term" value="P:potassium ion transport"/>
    <property type="evidence" value="ECO:0007669"/>
    <property type="project" value="UniProtKB-KW"/>
</dbReference>
<dbReference type="GO" id="GO:1902600">
    <property type="term" value="P:proton transmembrane transport"/>
    <property type="evidence" value="ECO:0007669"/>
    <property type="project" value="InterPro"/>
</dbReference>
<dbReference type="FunFam" id="1.20.1530.20:FF:000001">
    <property type="entry name" value="Glutathione-regulated potassium-efflux system protein KefB"/>
    <property type="match status" value="1"/>
</dbReference>
<dbReference type="FunFam" id="3.40.50.720:FF:000036">
    <property type="entry name" value="Glutathione-regulated potassium-efflux system protein KefB"/>
    <property type="match status" value="1"/>
</dbReference>
<dbReference type="Gene3D" id="1.20.1530.20">
    <property type="match status" value="1"/>
</dbReference>
<dbReference type="Gene3D" id="3.40.50.720">
    <property type="entry name" value="NAD(P)-binding Rossmann-like Domain"/>
    <property type="match status" value="1"/>
</dbReference>
<dbReference type="InterPro" id="IPR006153">
    <property type="entry name" value="Cation/H_exchanger_TM"/>
</dbReference>
<dbReference type="InterPro" id="IPR004771">
    <property type="entry name" value="K/H_exchanger"/>
</dbReference>
<dbReference type="InterPro" id="IPR038770">
    <property type="entry name" value="Na+/solute_symporter_sf"/>
</dbReference>
<dbReference type="InterPro" id="IPR036291">
    <property type="entry name" value="NAD(P)-bd_dom_sf"/>
</dbReference>
<dbReference type="InterPro" id="IPR003148">
    <property type="entry name" value="RCK_N"/>
</dbReference>
<dbReference type="NCBIfam" id="TIGR00932">
    <property type="entry name" value="2a37"/>
    <property type="match status" value="1"/>
</dbReference>
<dbReference type="PANTHER" id="PTHR46157:SF8">
    <property type="entry name" value="GLUTATHIONE-REGULATED POTASSIUM-EFFLUX SYSTEM PROTEIN"/>
    <property type="match status" value="1"/>
</dbReference>
<dbReference type="PANTHER" id="PTHR46157">
    <property type="entry name" value="K(+) EFFLUX ANTIPORTER 3, CHLOROPLASTIC"/>
    <property type="match status" value="1"/>
</dbReference>
<dbReference type="Pfam" id="PF00999">
    <property type="entry name" value="Na_H_Exchanger"/>
    <property type="match status" value="1"/>
</dbReference>
<dbReference type="Pfam" id="PF02254">
    <property type="entry name" value="TrkA_N"/>
    <property type="match status" value="1"/>
</dbReference>
<dbReference type="SUPFAM" id="SSF51735">
    <property type="entry name" value="NAD(P)-binding Rossmann-fold domains"/>
    <property type="match status" value="1"/>
</dbReference>
<dbReference type="PROSITE" id="PS51201">
    <property type="entry name" value="RCK_N"/>
    <property type="match status" value="1"/>
</dbReference>
<protein>
    <recommendedName>
        <fullName>Glutathione-regulated potassium-efflux system protein</fullName>
    </recommendedName>
    <alternativeName>
        <fullName>K(+)/H(+) antiporter</fullName>
    </alternativeName>
</protein>